<dbReference type="EMBL" id="AK003860">
    <property type="protein sequence ID" value="BAB23043.1"/>
    <property type="molecule type" value="mRNA"/>
</dbReference>
<dbReference type="EMBL" id="AK006068">
    <property type="protein sequence ID" value="BAB24394.1"/>
    <property type="status" value="ALT_FRAME"/>
    <property type="molecule type" value="mRNA"/>
</dbReference>
<dbReference type="EMBL" id="AK013276">
    <property type="protein sequence ID" value="BAB28764.1"/>
    <property type="molecule type" value="mRNA"/>
</dbReference>
<dbReference type="EMBL" id="BC045525">
    <property type="protein sequence ID" value="AAH45525.1"/>
    <property type="molecule type" value="mRNA"/>
</dbReference>
<dbReference type="CCDS" id="CCDS26498.1">
    <molecule id="Q9D176-1"/>
</dbReference>
<dbReference type="CCDS" id="CCDS56880.1">
    <molecule id="Q9D176-2"/>
</dbReference>
<dbReference type="RefSeq" id="NP_079767.2">
    <molecule id="Q9D176-1"/>
    <property type="nucleotide sequence ID" value="NM_025491.3"/>
</dbReference>
<dbReference type="RefSeq" id="NP_082616.1">
    <molecule id="Q9D176-2"/>
    <property type="nucleotide sequence ID" value="NM_028340.3"/>
</dbReference>
<dbReference type="SMR" id="Q9D176"/>
<dbReference type="BioGRID" id="211387">
    <property type="interactions" value="1"/>
</dbReference>
<dbReference type="FunCoup" id="Q9D176">
    <property type="interactions" value="770"/>
</dbReference>
<dbReference type="STRING" id="10090.ENSMUSP00000061423"/>
<dbReference type="PhosphoSitePlus" id="Q9D176"/>
<dbReference type="SwissPalm" id="Q9D176"/>
<dbReference type="PaxDb" id="10090-ENSMUSP00000061423"/>
<dbReference type="ProteomicsDB" id="254720">
    <molecule id="Q9D176-1"/>
</dbReference>
<dbReference type="ProteomicsDB" id="254721">
    <molecule id="Q9D176-2"/>
</dbReference>
<dbReference type="Antibodypedia" id="28340">
    <property type="antibodies" value="42 antibodies from 16 providers"/>
</dbReference>
<dbReference type="Ensembl" id="ENSMUST00000021816.12">
    <molecule id="Q9D176-2"/>
    <property type="protein sequence ID" value="ENSMUSP00000021816.6"/>
    <property type="gene ID" value="ENSMUSG00000021384.15"/>
</dbReference>
<dbReference type="Ensembl" id="ENSMUST00000058196.13">
    <molecule id="Q9D176-1"/>
    <property type="protein sequence ID" value="ENSMUSP00000061423.7"/>
    <property type="gene ID" value="ENSMUSG00000021384.15"/>
</dbReference>
<dbReference type="Ensembl" id="ENSMUST00000119721.2">
    <molecule id="Q9D176-3"/>
    <property type="protein sequence ID" value="ENSMUSP00000113631.2"/>
    <property type="gene ID" value="ENSMUSG00000021384.15"/>
</dbReference>
<dbReference type="GeneID" id="66329"/>
<dbReference type="KEGG" id="mmu:66329"/>
<dbReference type="UCSC" id="uc007qiz.2">
    <molecule id="Q9D176-1"/>
    <property type="organism name" value="mouse"/>
</dbReference>
<dbReference type="UCSC" id="uc007qja.2">
    <molecule id="Q9D176-2"/>
    <property type="organism name" value="mouse"/>
</dbReference>
<dbReference type="UCSC" id="uc007qjb.1">
    <molecule id="Q9D176-3"/>
    <property type="organism name" value="mouse"/>
</dbReference>
<dbReference type="AGR" id="MGI:1913579"/>
<dbReference type="CTD" id="203328"/>
<dbReference type="MGI" id="MGI:1913579">
    <property type="gene designation" value="Susd3"/>
</dbReference>
<dbReference type="VEuPathDB" id="HostDB:ENSMUSG00000021384"/>
<dbReference type="eggNOG" id="ENOG502RY7E">
    <property type="taxonomic scope" value="Eukaryota"/>
</dbReference>
<dbReference type="GeneTree" id="ENSGT00390000006976"/>
<dbReference type="HOGENOM" id="CLU_088608_0_0_1"/>
<dbReference type="InParanoid" id="Q9D176"/>
<dbReference type="OMA" id="QMWYQLR"/>
<dbReference type="OrthoDB" id="9939976at2759"/>
<dbReference type="PhylomeDB" id="Q9D176"/>
<dbReference type="TreeFam" id="TF335828"/>
<dbReference type="BioGRID-ORCS" id="66329">
    <property type="hits" value="3 hits in 78 CRISPR screens"/>
</dbReference>
<dbReference type="PRO" id="PR:Q9D176"/>
<dbReference type="Proteomes" id="UP000000589">
    <property type="component" value="Chromosome 13"/>
</dbReference>
<dbReference type="RNAct" id="Q9D176">
    <property type="molecule type" value="protein"/>
</dbReference>
<dbReference type="Bgee" id="ENSMUSG00000021384">
    <property type="expression patterns" value="Expressed in retinal neural layer and 91 other cell types or tissues"/>
</dbReference>
<dbReference type="ExpressionAtlas" id="Q9D176">
    <property type="expression patterns" value="baseline and differential"/>
</dbReference>
<dbReference type="GO" id="GO:0005886">
    <property type="term" value="C:plasma membrane"/>
    <property type="evidence" value="ECO:0000250"/>
    <property type="project" value="UniProtKB"/>
</dbReference>
<dbReference type="CDD" id="cd00033">
    <property type="entry name" value="CCP"/>
    <property type="match status" value="1"/>
</dbReference>
<dbReference type="Gene3D" id="2.10.70.10">
    <property type="entry name" value="Complement Module, domain 1"/>
    <property type="match status" value="1"/>
</dbReference>
<dbReference type="InterPro" id="IPR053067">
    <property type="entry name" value="SUSD3"/>
</dbReference>
<dbReference type="InterPro" id="IPR035976">
    <property type="entry name" value="Sushi/SCR/CCP_sf"/>
</dbReference>
<dbReference type="InterPro" id="IPR000436">
    <property type="entry name" value="Sushi_SCR_CCP_dom"/>
</dbReference>
<dbReference type="PANTHER" id="PTHR46879">
    <property type="entry name" value="SUSHI DOMAIN-CONTAINING PROTEIN 3"/>
    <property type="match status" value="1"/>
</dbReference>
<dbReference type="PANTHER" id="PTHR46879:SF1">
    <property type="entry name" value="SUSHI DOMAIN-CONTAINING PROTEIN 3"/>
    <property type="match status" value="1"/>
</dbReference>
<dbReference type="Pfam" id="PF00084">
    <property type="entry name" value="Sushi"/>
    <property type="match status" value="1"/>
</dbReference>
<dbReference type="SMART" id="SM00032">
    <property type="entry name" value="CCP"/>
    <property type="match status" value="1"/>
</dbReference>
<dbReference type="SUPFAM" id="SSF57535">
    <property type="entry name" value="Complement control module/SCR domain"/>
    <property type="match status" value="1"/>
</dbReference>
<dbReference type="PROSITE" id="PS50923">
    <property type="entry name" value="SUSHI"/>
    <property type="match status" value="1"/>
</dbReference>
<evidence type="ECO:0000250" key="1">
    <source>
        <dbReference type="UniProtKB" id="Q96L08"/>
    </source>
</evidence>
<evidence type="ECO:0000255" key="2"/>
<evidence type="ECO:0000255" key="3">
    <source>
        <dbReference type="PROSITE-ProRule" id="PRU00302"/>
    </source>
</evidence>
<evidence type="ECO:0000256" key="4">
    <source>
        <dbReference type="SAM" id="MobiDB-lite"/>
    </source>
</evidence>
<evidence type="ECO:0000303" key="5">
    <source>
    </source>
</evidence>
<evidence type="ECO:0000303" key="6">
    <source>
    </source>
</evidence>
<evidence type="ECO:0000305" key="7"/>
<name>SUSD3_MOUSE</name>
<feature type="chain" id="PRO_0000251974" description="Sushi domain-containing protein 3">
    <location>
        <begin position="1"/>
        <end position="269"/>
    </location>
</feature>
<feature type="topological domain" description="Extracellular" evidence="2">
    <location>
        <begin position="1"/>
        <end position="103"/>
    </location>
</feature>
<feature type="transmembrane region" description="Helical" evidence="2">
    <location>
        <begin position="104"/>
        <end position="124"/>
    </location>
</feature>
<feature type="topological domain" description="Cytoplasmic" evidence="2">
    <location>
        <begin position="125"/>
        <end position="269"/>
    </location>
</feature>
<feature type="domain" description="Sushi" evidence="3">
    <location>
        <begin position="30"/>
        <end position="93"/>
    </location>
</feature>
<feature type="region of interest" description="Disordered" evidence="4">
    <location>
        <begin position="1"/>
        <end position="23"/>
    </location>
</feature>
<feature type="region of interest" description="Disordered" evidence="4">
    <location>
        <begin position="171"/>
        <end position="237"/>
    </location>
</feature>
<feature type="compositionally biased region" description="Gly residues" evidence="4">
    <location>
        <begin position="176"/>
        <end position="190"/>
    </location>
</feature>
<feature type="disulfide bond" evidence="3">
    <location>
        <begin position="32"/>
        <end position="75"/>
    </location>
</feature>
<feature type="disulfide bond" evidence="3">
    <location>
        <begin position="61"/>
        <end position="91"/>
    </location>
</feature>
<feature type="splice variant" id="VSP_020835" description="In isoform 2." evidence="5">
    <original>MRRTSATLRGRARPRWRAGNTTPVPVNQT</original>
    <variation>MRRLSLSKVTCLALESK</variation>
    <location>
        <begin position="1"/>
        <end position="29"/>
    </location>
</feature>
<feature type="splice variant" id="VSP_020836" description="In isoform 3." evidence="6">
    <original>TAQLWYQLRGEDLETVQAAYLGLKGHNH</original>
    <variation>YSGLMSFQKLCLAVRLLITSCQVPWGSV</variation>
    <location>
        <begin position="143"/>
        <end position="170"/>
    </location>
</feature>
<feature type="splice variant" id="VSP_020837" description="In isoform 3." evidence="6">
    <location>
        <begin position="171"/>
        <end position="269"/>
    </location>
</feature>
<proteinExistence type="evidence at transcript level"/>
<organism>
    <name type="scientific">Mus musculus</name>
    <name type="common">Mouse</name>
    <dbReference type="NCBI Taxonomy" id="10090"/>
    <lineage>
        <taxon>Eukaryota</taxon>
        <taxon>Metazoa</taxon>
        <taxon>Chordata</taxon>
        <taxon>Craniata</taxon>
        <taxon>Vertebrata</taxon>
        <taxon>Euteleostomi</taxon>
        <taxon>Mammalia</taxon>
        <taxon>Eutheria</taxon>
        <taxon>Euarchontoglires</taxon>
        <taxon>Glires</taxon>
        <taxon>Rodentia</taxon>
        <taxon>Myomorpha</taxon>
        <taxon>Muroidea</taxon>
        <taxon>Muridae</taxon>
        <taxon>Murinae</taxon>
        <taxon>Mus</taxon>
        <taxon>Mus</taxon>
    </lineage>
</organism>
<keyword id="KW-0025">Alternative splicing</keyword>
<keyword id="KW-1003">Cell membrane</keyword>
<keyword id="KW-1015">Disulfide bond</keyword>
<keyword id="KW-0472">Membrane</keyword>
<keyword id="KW-1185">Reference proteome</keyword>
<keyword id="KW-0768">Sushi</keyword>
<keyword id="KW-0812">Transmembrane</keyword>
<keyword id="KW-1133">Transmembrane helix</keyword>
<sequence>MRRTSATLRGRARPRWRAGNTTPVPVNQTGTCAQLHPPPQGTLQVVRGDGTSLGTVLIFHCPSGHQMVGSGLLTCAWNGSTVDWSSGSPVCKAVPPHETFGFKVAVIASIVSCAIILLMSMAFLTCCLLKCVQKNERRRADRTAQLWYQLRGEDLETVQAAYLGLKGHNHNNSSSVGGGNGGPSGGGGKPGIQHSQAHDNHSFTTDPGDIREQAGVTHSVDKDPWTFRMGTPGPGGCSSSPGTYVMVHALNSAGLAPGNPGRPKVYLPG</sequence>
<comment type="subcellular location">
    <subcellularLocation>
        <location evidence="1">Cell membrane</location>
        <topology evidence="1">Single-pass membrane protein</topology>
    </subcellularLocation>
    <text evidence="1">Prominently localized to cell-cell borders.</text>
</comment>
<comment type="alternative products">
    <event type="alternative splicing"/>
    <isoform>
        <id>Q9D176-1</id>
        <name>1</name>
        <sequence type="displayed"/>
    </isoform>
    <isoform>
        <id>Q9D176-2</id>
        <name>2</name>
        <sequence type="described" ref="VSP_020835"/>
    </isoform>
    <isoform>
        <id>Q9D176-3</id>
        <name>3</name>
        <sequence type="described" ref="VSP_020836 VSP_020837"/>
    </isoform>
</comment>
<comment type="sequence caution" evidence="7">
    <conflict type="frameshift">
        <sequence resource="EMBL-CDS" id="BAB24394"/>
    </conflict>
</comment>
<protein>
    <recommendedName>
        <fullName>Sushi domain-containing protein 3</fullName>
    </recommendedName>
</protein>
<gene>
    <name type="primary">Susd3</name>
</gene>
<reference key="1">
    <citation type="journal article" date="2005" name="Science">
        <title>The transcriptional landscape of the mammalian genome.</title>
        <authorList>
            <person name="Carninci P."/>
            <person name="Kasukawa T."/>
            <person name="Katayama S."/>
            <person name="Gough J."/>
            <person name="Frith M.C."/>
            <person name="Maeda N."/>
            <person name="Oyama R."/>
            <person name="Ravasi T."/>
            <person name="Lenhard B."/>
            <person name="Wells C."/>
            <person name="Kodzius R."/>
            <person name="Shimokawa K."/>
            <person name="Bajic V.B."/>
            <person name="Brenner S.E."/>
            <person name="Batalov S."/>
            <person name="Forrest A.R."/>
            <person name="Zavolan M."/>
            <person name="Davis M.J."/>
            <person name="Wilming L.G."/>
            <person name="Aidinis V."/>
            <person name="Allen J.E."/>
            <person name="Ambesi-Impiombato A."/>
            <person name="Apweiler R."/>
            <person name="Aturaliya R.N."/>
            <person name="Bailey T.L."/>
            <person name="Bansal M."/>
            <person name="Baxter L."/>
            <person name="Beisel K.W."/>
            <person name="Bersano T."/>
            <person name="Bono H."/>
            <person name="Chalk A.M."/>
            <person name="Chiu K.P."/>
            <person name="Choudhary V."/>
            <person name="Christoffels A."/>
            <person name="Clutterbuck D.R."/>
            <person name="Crowe M.L."/>
            <person name="Dalla E."/>
            <person name="Dalrymple B.P."/>
            <person name="de Bono B."/>
            <person name="Della Gatta G."/>
            <person name="di Bernardo D."/>
            <person name="Down T."/>
            <person name="Engstrom P."/>
            <person name="Fagiolini M."/>
            <person name="Faulkner G."/>
            <person name="Fletcher C.F."/>
            <person name="Fukushima T."/>
            <person name="Furuno M."/>
            <person name="Futaki S."/>
            <person name="Gariboldi M."/>
            <person name="Georgii-Hemming P."/>
            <person name="Gingeras T.R."/>
            <person name="Gojobori T."/>
            <person name="Green R.E."/>
            <person name="Gustincich S."/>
            <person name="Harbers M."/>
            <person name="Hayashi Y."/>
            <person name="Hensch T.K."/>
            <person name="Hirokawa N."/>
            <person name="Hill D."/>
            <person name="Huminiecki L."/>
            <person name="Iacono M."/>
            <person name="Ikeo K."/>
            <person name="Iwama A."/>
            <person name="Ishikawa T."/>
            <person name="Jakt M."/>
            <person name="Kanapin A."/>
            <person name="Katoh M."/>
            <person name="Kawasawa Y."/>
            <person name="Kelso J."/>
            <person name="Kitamura H."/>
            <person name="Kitano H."/>
            <person name="Kollias G."/>
            <person name="Krishnan S.P."/>
            <person name="Kruger A."/>
            <person name="Kummerfeld S.K."/>
            <person name="Kurochkin I.V."/>
            <person name="Lareau L.F."/>
            <person name="Lazarevic D."/>
            <person name="Lipovich L."/>
            <person name="Liu J."/>
            <person name="Liuni S."/>
            <person name="McWilliam S."/>
            <person name="Madan Babu M."/>
            <person name="Madera M."/>
            <person name="Marchionni L."/>
            <person name="Matsuda H."/>
            <person name="Matsuzawa S."/>
            <person name="Miki H."/>
            <person name="Mignone F."/>
            <person name="Miyake S."/>
            <person name="Morris K."/>
            <person name="Mottagui-Tabar S."/>
            <person name="Mulder N."/>
            <person name="Nakano N."/>
            <person name="Nakauchi H."/>
            <person name="Ng P."/>
            <person name="Nilsson R."/>
            <person name="Nishiguchi S."/>
            <person name="Nishikawa S."/>
            <person name="Nori F."/>
            <person name="Ohara O."/>
            <person name="Okazaki Y."/>
            <person name="Orlando V."/>
            <person name="Pang K.C."/>
            <person name="Pavan W.J."/>
            <person name="Pavesi G."/>
            <person name="Pesole G."/>
            <person name="Petrovsky N."/>
            <person name="Piazza S."/>
            <person name="Reed J."/>
            <person name="Reid J.F."/>
            <person name="Ring B.Z."/>
            <person name="Ringwald M."/>
            <person name="Rost B."/>
            <person name="Ruan Y."/>
            <person name="Salzberg S.L."/>
            <person name="Sandelin A."/>
            <person name="Schneider C."/>
            <person name="Schoenbach C."/>
            <person name="Sekiguchi K."/>
            <person name="Semple C.A."/>
            <person name="Seno S."/>
            <person name="Sessa L."/>
            <person name="Sheng Y."/>
            <person name="Shibata Y."/>
            <person name="Shimada H."/>
            <person name="Shimada K."/>
            <person name="Silva D."/>
            <person name="Sinclair B."/>
            <person name="Sperling S."/>
            <person name="Stupka E."/>
            <person name="Sugiura K."/>
            <person name="Sultana R."/>
            <person name="Takenaka Y."/>
            <person name="Taki K."/>
            <person name="Tammoja K."/>
            <person name="Tan S.L."/>
            <person name="Tang S."/>
            <person name="Taylor M.S."/>
            <person name="Tegner J."/>
            <person name="Teichmann S.A."/>
            <person name="Ueda H.R."/>
            <person name="van Nimwegen E."/>
            <person name="Verardo R."/>
            <person name="Wei C.L."/>
            <person name="Yagi K."/>
            <person name="Yamanishi H."/>
            <person name="Zabarovsky E."/>
            <person name="Zhu S."/>
            <person name="Zimmer A."/>
            <person name="Hide W."/>
            <person name="Bult C."/>
            <person name="Grimmond S.M."/>
            <person name="Teasdale R.D."/>
            <person name="Liu E.T."/>
            <person name="Brusic V."/>
            <person name="Quackenbush J."/>
            <person name="Wahlestedt C."/>
            <person name="Mattick J.S."/>
            <person name="Hume D.A."/>
            <person name="Kai C."/>
            <person name="Sasaki D."/>
            <person name="Tomaru Y."/>
            <person name="Fukuda S."/>
            <person name="Kanamori-Katayama M."/>
            <person name="Suzuki M."/>
            <person name="Aoki J."/>
            <person name="Arakawa T."/>
            <person name="Iida J."/>
            <person name="Imamura K."/>
            <person name="Itoh M."/>
            <person name="Kato T."/>
            <person name="Kawaji H."/>
            <person name="Kawagashira N."/>
            <person name="Kawashima T."/>
            <person name="Kojima M."/>
            <person name="Kondo S."/>
            <person name="Konno H."/>
            <person name="Nakano K."/>
            <person name="Ninomiya N."/>
            <person name="Nishio T."/>
            <person name="Okada M."/>
            <person name="Plessy C."/>
            <person name="Shibata K."/>
            <person name="Shiraki T."/>
            <person name="Suzuki S."/>
            <person name="Tagami M."/>
            <person name="Waki K."/>
            <person name="Watahiki A."/>
            <person name="Okamura-Oho Y."/>
            <person name="Suzuki H."/>
            <person name="Kawai J."/>
            <person name="Hayashizaki Y."/>
        </authorList>
    </citation>
    <scope>NUCLEOTIDE SEQUENCE [LARGE SCALE MRNA] (ISOFORMS 1 AND 3)</scope>
    <source>
        <strain>C57BL/6J</strain>
        <tissue>Embryo</tissue>
        <tissue>Testis</tissue>
    </source>
</reference>
<reference key="2">
    <citation type="journal article" date="2004" name="Genome Res.">
        <title>The status, quality, and expansion of the NIH full-length cDNA project: the Mammalian Gene Collection (MGC).</title>
        <authorList>
            <consortium name="The MGC Project Team"/>
        </authorList>
    </citation>
    <scope>NUCLEOTIDE SEQUENCE [LARGE SCALE MRNA] (ISOFORM 2)</scope>
    <source>
        <tissue>Eye</tissue>
    </source>
</reference>
<accession>Q9D176</accession>
<accession>Q80XL5</accession>
<accession>Q9CYV1</accession>
<accession>Q9DA86</accession>